<accession>Q33015</accession>
<evidence type="ECO:0000255" key="1">
    <source>
        <dbReference type="HAMAP-Rule" id="MF_01338"/>
    </source>
</evidence>
<protein>
    <recommendedName>
        <fullName evidence="1">Ribulose bisphosphate carboxylase large chain</fullName>
        <shortName evidence="1">RuBisCO large subunit</shortName>
        <ecNumber evidence="1">4.1.1.39</ecNumber>
    </recommendedName>
</protein>
<proteinExistence type="inferred from homology"/>
<keyword id="KW-0113">Calvin cycle</keyword>
<keyword id="KW-0120">Carbon dioxide fixation</keyword>
<keyword id="KW-0150">Chloroplast</keyword>
<keyword id="KW-1015">Disulfide bond</keyword>
<keyword id="KW-0456">Lyase</keyword>
<keyword id="KW-0460">Magnesium</keyword>
<keyword id="KW-0479">Metal-binding</keyword>
<keyword id="KW-0488">Methylation</keyword>
<keyword id="KW-0503">Monooxygenase</keyword>
<keyword id="KW-0560">Oxidoreductase</keyword>
<keyword id="KW-0601">Photorespiration</keyword>
<keyword id="KW-0602">Photosynthesis</keyword>
<keyword id="KW-0934">Plastid</keyword>
<organism>
    <name type="scientific">Pteris vittata</name>
    <name type="common">Chinese ladder brake</name>
    <dbReference type="NCBI Taxonomy" id="13821"/>
    <lineage>
        <taxon>Eukaryota</taxon>
        <taxon>Viridiplantae</taxon>
        <taxon>Streptophyta</taxon>
        <taxon>Embryophyta</taxon>
        <taxon>Tracheophyta</taxon>
        <taxon>Polypodiopsida</taxon>
        <taxon>Polypodiidae</taxon>
        <taxon>Polypodiales</taxon>
        <taxon>Pteridineae</taxon>
        <taxon>Pteridaceae</taxon>
        <taxon>Pteridoideae</taxon>
        <taxon>Pteris</taxon>
        <taxon>Pteris subgen. Pteris</taxon>
        <taxon>Pteris sect. Pteris</taxon>
    </lineage>
</organism>
<feature type="chain" id="PRO_0000062577" description="Ribulose bisphosphate carboxylase large chain">
    <location>
        <begin position="1" status="less than"/>
        <end position="440" status="greater than"/>
    </location>
</feature>
<feature type="active site" description="Proton acceptor" evidence="1">
    <location>
        <position position="165"/>
    </location>
</feature>
<feature type="active site" description="Proton acceptor" evidence="1">
    <location>
        <position position="284"/>
    </location>
</feature>
<feature type="binding site" description="in homodimeric partner" evidence="1">
    <location>
        <position position="113"/>
    </location>
    <ligand>
        <name>substrate</name>
    </ligand>
</feature>
<feature type="binding site" evidence="1">
    <location>
        <position position="163"/>
    </location>
    <ligand>
        <name>substrate</name>
    </ligand>
</feature>
<feature type="binding site" evidence="1">
    <location>
        <position position="167"/>
    </location>
    <ligand>
        <name>substrate</name>
    </ligand>
</feature>
<feature type="binding site" description="via carbamate group" evidence="1">
    <location>
        <position position="191"/>
    </location>
    <ligand>
        <name>Mg(2+)</name>
        <dbReference type="ChEBI" id="CHEBI:18420"/>
    </ligand>
</feature>
<feature type="binding site" evidence="1">
    <location>
        <position position="193"/>
    </location>
    <ligand>
        <name>Mg(2+)</name>
        <dbReference type="ChEBI" id="CHEBI:18420"/>
    </ligand>
</feature>
<feature type="binding site" evidence="1">
    <location>
        <position position="194"/>
    </location>
    <ligand>
        <name>Mg(2+)</name>
        <dbReference type="ChEBI" id="CHEBI:18420"/>
    </ligand>
</feature>
<feature type="binding site" evidence="1">
    <location>
        <position position="285"/>
    </location>
    <ligand>
        <name>substrate</name>
    </ligand>
</feature>
<feature type="binding site" evidence="1">
    <location>
        <position position="317"/>
    </location>
    <ligand>
        <name>substrate</name>
    </ligand>
</feature>
<feature type="binding site" evidence="1">
    <location>
        <position position="369"/>
    </location>
    <ligand>
        <name>substrate</name>
    </ligand>
</feature>
<feature type="site" description="Transition state stabilizer" evidence="1">
    <location>
        <position position="324"/>
    </location>
</feature>
<feature type="modified residue" description="N6,N6,N6-trimethyllysine" evidence="1">
    <location>
        <position position="4"/>
    </location>
</feature>
<feature type="modified residue" description="N6-carboxylysine" evidence="1">
    <location>
        <position position="191"/>
    </location>
</feature>
<feature type="disulfide bond" description="Interchain; in linked form" evidence="1">
    <location>
        <position position="237"/>
    </location>
</feature>
<feature type="non-terminal residue">
    <location>
        <position position="1"/>
    </location>
</feature>
<feature type="non-terminal residue">
    <location>
        <position position="440"/>
    </location>
</feature>
<comment type="function">
    <text evidence="1">RuBisCO catalyzes two reactions: the carboxylation of D-ribulose 1,5-bisphosphate, the primary event in carbon dioxide fixation, as well as the oxidative fragmentation of the pentose substrate in the photorespiration process. Both reactions occur simultaneously and in competition at the same active site.</text>
</comment>
<comment type="catalytic activity">
    <reaction evidence="1">
        <text>2 (2R)-3-phosphoglycerate + 2 H(+) = D-ribulose 1,5-bisphosphate + CO2 + H2O</text>
        <dbReference type="Rhea" id="RHEA:23124"/>
        <dbReference type="ChEBI" id="CHEBI:15377"/>
        <dbReference type="ChEBI" id="CHEBI:15378"/>
        <dbReference type="ChEBI" id="CHEBI:16526"/>
        <dbReference type="ChEBI" id="CHEBI:57870"/>
        <dbReference type="ChEBI" id="CHEBI:58272"/>
        <dbReference type="EC" id="4.1.1.39"/>
    </reaction>
</comment>
<comment type="catalytic activity">
    <reaction evidence="1">
        <text>D-ribulose 1,5-bisphosphate + O2 = 2-phosphoglycolate + (2R)-3-phosphoglycerate + 2 H(+)</text>
        <dbReference type="Rhea" id="RHEA:36631"/>
        <dbReference type="ChEBI" id="CHEBI:15378"/>
        <dbReference type="ChEBI" id="CHEBI:15379"/>
        <dbReference type="ChEBI" id="CHEBI:57870"/>
        <dbReference type="ChEBI" id="CHEBI:58033"/>
        <dbReference type="ChEBI" id="CHEBI:58272"/>
    </reaction>
</comment>
<comment type="cofactor">
    <cofactor evidence="1">
        <name>Mg(2+)</name>
        <dbReference type="ChEBI" id="CHEBI:18420"/>
    </cofactor>
    <text evidence="1">Binds 1 Mg(2+) ion per subunit.</text>
</comment>
<comment type="subunit">
    <text evidence="1">Heterohexadecamer of 8 large chains and 8 small chains; disulfide-linked. The disulfide link is formed within the large subunit homodimers.</text>
</comment>
<comment type="subcellular location">
    <subcellularLocation>
        <location>Plastid</location>
        <location>Chloroplast</location>
    </subcellularLocation>
</comment>
<comment type="PTM">
    <text evidence="1">The disulfide bond which can form in the large chain dimeric partners within the hexadecamer appears to be associated with oxidative stress and protein turnover.</text>
</comment>
<comment type="miscellaneous">
    <text evidence="1">The basic functional RuBisCO is composed of a large chain homodimer in a 'head-to-tail' conformation. In form I RuBisCO this homodimer is arranged in a barrel-like tetramer with the small subunits forming a tetrameric 'cap' on each end of the 'barrel'.</text>
</comment>
<comment type="similarity">
    <text evidence="1">Belongs to the RuBisCO large chain family. Type I subfamily.</text>
</comment>
<sequence length="440" mass="48575">VGFKAGVKDYRLTYYTPEYKTKDTDILAAFRMTPQPGVPAEEAGAAVAAESSTGTWTTVWTDGLTSLDRYKGRCYDIEPVAGEENQYIAYVAYPLDLFEEGSVTNMLTSIVGNVFGXKAXRALRLEDLRILPAYSKTFIGPPHGIQVERDKLNKYGRPLLGCTIKPKLGLCAKNYGRAVYECLRGGLDFTKDDENVNSQPSMRWRDRFLFVAEALFKAQAETGEVKGHYLNATAGTCEEMIKRATFARELGAPIVMHDYLTGGFTANTSLAFYCRDNGLLLHIHRAMHAVIDRQRNHGMHLRVLAKALRMSGGDHIHAGTVVGKLEGEREVTLGFVDLLRDDYIEKDRSRGIYFTQDWVSMPGVLPVASGGIHVWHMPALTEIFGDDSVLQFGGGTLGHPWGNAPGAVANRVALEACVQARNEGRDLAREGNEIIREASK</sequence>
<dbReference type="EC" id="4.1.1.39" evidence="1"/>
<dbReference type="EMBL" id="U05941">
    <property type="protein sequence ID" value="AAC48966.1"/>
    <property type="molecule type" value="Genomic_DNA"/>
</dbReference>
<dbReference type="GO" id="GO:0009507">
    <property type="term" value="C:chloroplast"/>
    <property type="evidence" value="ECO:0007669"/>
    <property type="project" value="UniProtKB-SubCell"/>
</dbReference>
<dbReference type="GO" id="GO:0000287">
    <property type="term" value="F:magnesium ion binding"/>
    <property type="evidence" value="ECO:0007669"/>
    <property type="project" value="InterPro"/>
</dbReference>
<dbReference type="GO" id="GO:0004497">
    <property type="term" value="F:monooxygenase activity"/>
    <property type="evidence" value="ECO:0007669"/>
    <property type="project" value="UniProtKB-KW"/>
</dbReference>
<dbReference type="GO" id="GO:0016984">
    <property type="term" value="F:ribulose-bisphosphate carboxylase activity"/>
    <property type="evidence" value="ECO:0007669"/>
    <property type="project" value="UniProtKB-EC"/>
</dbReference>
<dbReference type="GO" id="GO:0009853">
    <property type="term" value="P:photorespiration"/>
    <property type="evidence" value="ECO:0007669"/>
    <property type="project" value="UniProtKB-KW"/>
</dbReference>
<dbReference type="GO" id="GO:0019253">
    <property type="term" value="P:reductive pentose-phosphate cycle"/>
    <property type="evidence" value="ECO:0007669"/>
    <property type="project" value="UniProtKB-KW"/>
</dbReference>
<dbReference type="CDD" id="cd08212">
    <property type="entry name" value="RuBisCO_large_I"/>
    <property type="match status" value="1"/>
</dbReference>
<dbReference type="FunFam" id="3.30.70.150:FF:000001">
    <property type="entry name" value="Ribulose bisphosphate carboxylase large chain"/>
    <property type="match status" value="1"/>
</dbReference>
<dbReference type="Gene3D" id="3.20.20.110">
    <property type="entry name" value="Ribulose bisphosphate carboxylase, large subunit, C-terminal domain"/>
    <property type="match status" value="1"/>
</dbReference>
<dbReference type="Gene3D" id="3.30.70.150">
    <property type="entry name" value="RuBisCO large subunit, N-terminal domain"/>
    <property type="match status" value="1"/>
</dbReference>
<dbReference type="HAMAP" id="MF_01338">
    <property type="entry name" value="RuBisCO_L_type1"/>
    <property type="match status" value="1"/>
</dbReference>
<dbReference type="InterPro" id="IPR033966">
    <property type="entry name" value="RuBisCO"/>
</dbReference>
<dbReference type="InterPro" id="IPR020878">
    <property type="entry name" value="RuBisCo_large_chain_AS"/>
</dbReference>
<dbReference type="InterPro" id="IPR000685">
    <property type="entry name" value="RuBisCO_lsu_C"/>
</dbReference>
<dbReference type="InterPro" id="IPR036376">
    <property type="entry name" value="RuBisCO_lsu_C_sf"/>
</dbReference>
<dbReference type="InterPro" id="IPR017443">
    <property type="entry name" value="RuBisCO_lsu_fd_N"/>
</dbReference>
<dbReference type="InterPro" id="IPR036422">
    <property type="entry name" value="RuBisCO_lsu_N_sf"/>
</dbReference>
<dbReference type="InterPro" id="IPR020888">
    <property type="entry name" value="RuBisCO_lsuI"/>
</dbReference>
<dbReference type="NCBIfam" id="NF003252">
    <property type="entry name" value="PRK04208.1"/>
    <property type="match status" value="1"/>
</dbReference>
<dbReference type="PANTHER" id="PTHR42704">
    <property type="entry name" value="RIBULOSE BISPHOSPHATE CARBOXYLASE"/>
    <property type="match status" value="1"/>
</dbReference>
<dbReference type="PANTHER" id="PTHR42704:SF17">
    <property type="entry name" value="RIBULOSE BISPHOSPHATE CARBOXYLASE LARGE CHAIN"/>
    <property type="match status" value="1"/>
</dbReference>
<dbReference type="Pfam" id="PF00016">
    <property type="entry name" value="RuBisCO_large"/>
    <property type="match status" value="1"/>
</dbReference>
<dbReference type="Pfam" id="PF02788">
    <property type="entry name" value="RuBisCO_large_N"/>
    <property type="match status" value="1"/>
</dbReference>
<dbReference type="SFLD" id="SFLDG01052">
    <property type="entry name" value="RuBisCO"/>
    <property type="match status" value="1"/>
</dbReference>
<dbReference type="SFLD" id="SFLDS00014">
    <property type="entry name" value="RuBisCO"/>
    <property type="match status" value="1"/>
</dbReference>
<dbReference type="SFLD" id="SFLDG00301">
    <property type="entry name" value="RuBisCO-like_proteins"/>
    <property type="match status" value="1"/>
</dbReference>
<dbReference type="SUPFAM" id="SSF51649">
    <property type="entry name" value="RuBisCo, C-terminal domain"/>
    <property type="match status" value="1"/>
</dbReference>
<dbReference type="SUPFAM" id="SSF54966">
    <property type="entry name" value="RuBisCO, large subunit, small (N-terminal) domain"/>
    <property type="match status" value="1"/>
</dbReference>
<dbReference type="PROSITE" id="PS00157">
    <property type="entry name" value="RUBISCO_LARGE"/>
    <property type="match status" value="1"/>
</dbReference>
<geneLocation type="chloroplast"/>
<reference key="1">
    <citation type="journal article" date="1994" name="Mol. Phylogenet. Evol.">
        <title>Phylogenetic relationships of dennstaedtioid ferns: evidence from rbcL sequences.</title>
        <authorList>
            <person name="Wolf P.G."/>
            <person name="Soltis P.S."/>
            <person name="Soltis D.E."/>
        </authorList>
    </citation>
    <scope>NUCLEOTIDE SEQUENCE [GENOMIC DNA]</scope>
    <source>
        <tissue>Leaf</tissue>
    </source>
</reference>
<name>RBL_PTEVI</name>
<gene>
    <name evidence="1" type="primary">rbcL</name>
</gene>